<evidence type="ECO:0000255" key="1">
    <source>
        <dbReference type="HAMAP-Rule" id="MF_00344"/>
    </source>
</evidence>
<accession>B1YIZ1</accession>
<protein>
    <recommendedName>
        <fullName evidence="1">GMP synthase [glutamine-hydrolyzing]</fullName>
        <ecNumber evidence="1">6.3.5.2</ecNumber>
    </recommendedName>
    <alternativeName>
        <fullName evidence="1">GMP synthetase</fullName>
    </alternativeName>
    <alternativeName>
        <fullName evidence="1">Glutamine amidotransferase</fullName>
    </alternativeName>
</protein>
<feature type="chain" id="PRO_1000190239" description="GMP synthase [glutamine-hydrolyzing]">
    <location>
        <begin position="1"/>
        <end position="514"/>
    </location>
</feature>
<feature type="domain" description="Glutamine amidotransferase type-1" evidence="1">
    <location>
        <begin position="9"/>
        <end position="199"/>
    </location>
</feature>
<feature type="domain" description="GMPS ATP-PPase" evidence="1">
    <location>
        <begin position="200"/>
        <end position="389"/>
    </location>
</feature>
<feature type="active site" description="Nucleophile" evidence="1">
    <location>
        <position position="86"/>
    </location>
</feature>
<feature type="active site" evidence="1">
    <location>
        <position position="173"/>
    </location>
</feature>
<feature type="active site" evidence="1">
    <location>
        <position position="175"/>
    </location>
</feature>
<feature type="binding site" evidence="1">
    <location>
        <begin position="227"/>
        <end position="233"/>
    </location>
    <ligand>
        <name>ATP</name>
        <dbReference type="ChEBI" id="CHEBI:30616"/>
    </ligand>
</feature>
<dbReference type="EC" id="6.3.5.2" evidence="1"/>
<dbReference type="EMBL" id="CP001022">
    <property type="protein sequence ID" value="ACB59921.1"/>
    <property type="molecule type" value="Genomic_DNA"/>
</dbReference>
<dbReference type="SMR" id="B1YIZ1"/>
<dbReference type="STRING" id="262543.Exig_0439"/>
<dbReference type="MEROPS" id="C26.A21"/>
<dbReference type="KEGG" id="esi:Exig_0439"/>
<dbReference type="eggNOG" id="COG0518">
    <property type="taxonomic scope" value="Bacteria"/>
</dbReference>
<dbReference type="eggNOG" id="COG0519">
    <property type="taxonomic scope" value="Bacteria"/>
</dbReference>
<dbReference type="HOGENOM" id="CLU_014340_0_5_9"/>
<dbReference type="UniPathway" id="UPA00189">
    <property type="reaction ID" value="UER00296"/>
</dbReference>
<dbReference type="Proteomes" id="UP000001681">
    <property type="component" value="Chromosome"/>
</dbReference>
<dbReference type="GO" id="GO:0005829">
    <property type="term" value="C:cytosol"/>
    <property type="evidence" value="ECO:0007669"/>
    <property type="project" value="TreeGrafter"/>
</dbReference>
<dbReference type="GO" id="GO:0005524">
    <property type="term" value="F:ATP binding"/>
    <property type="evidence" value="ECO:0007669"/>
    <property type="project" value="UniProtKB-UniRule"/>
</dbReference>
<dbReference type="GO" id="GO:0003921">
    <property type="term" value="F:GMP synthase activity"/>
    <property type="evidence" value="ECO:0007669"/>
    <property type="project" value="InterPro"/>
</dbReference>
<dbReference type="CDD" id="cd01742">
    <property type="entry name" value="GATase1_GMP_Synthase"/>
    <property type="match status" value="1"/>
</dbReference>
<dbReference type="CDD" id="cd01997">
    <property type="entry name" value="GMP_synthase_C"/>
    <property type="match status" value="1"/>
</dbReference>
<dbReference type="FunFam" id="3.30.300.10:FF:000002">
    <property type="entry name" value="GMP synthase [glutamine-hydrolyzing]"/>
    <property type="match status" value="1"/>
</dbReference>
<dbReference type="FunFam" id="3.40.50.620:FF:000001">
    <property type="entry name" value="GMP synthase [glutamine-hydrolyzing]"/>
    <property type="match status" value="1"/>
</dbReference>
<dbReference type="FunFam" id="3.40.50.880:FF:000001">
    <property type="entry name" value="GMP synthase [glutamine-hydrolyzing]"/>
    <property type="match status" value="1"/>
</dbReference>
<dbReference type="Gene3D" id="3.30.300.10">
    <property type="match status" value="1"/>
</dbReference>
<dbReference type="Gene3D" id="3.40.50.880">
    <property type="match status" value="1"/>
</dbReference>
<dbReference type="Gene3D" id="3.40.50.620">
    <property type="entry name" value="HUPs"/>
    <property type="match status" value="1"/>
</dbReference>
<dbReference type="HAMAP" id="MF_00344">
    <property type="entry name" value="GMP_synthase"/>
    <property type="match status" value="1"/>
</dbReference>
<dbReference type="InterPro" id="IPR029062">
    <property type="entry name" value="Class_I_gatase-like"/>
</dbReference>
<dbReference type="InterPro" id="IPR017926">
    <property type="entry name" value="GATASE"/>
</dbReference>
<dbReference type="InterPro" id="IPR001674">
    <property type="entry name" value="GMP_synth_C"/>
</dbReference>
<dbReference type="InterPro" id="IPR004739">
    <property type="entry name" value="GMP_synth_GATase"/>
</dbReference>
<dbReference type="InterPro" id="IPR022955">
    <property type="entry name" value="GMP_synthase"/>
</dbReference>
<dbReference type="InterPro" id="IPR025777">
    <property type="entry name" value="GMPS_ATP_PPase_dom"/>
</dbReference>
<dbReference type="InterPro" id="IPR022310">
    <property type="entry name" value="NAD/GMP_synthase"/>
</dbReference>
<dbReference type="InterPro" id="IPR014729">
    <property type="entry name" value="Rossmann-like_a/b/a_fold"/>
</dbReference>
<dbReference type="NCBIfam" id="TIGR00884">
    <property type="entry name" value="guaA_Cterm"/>
    <property type="match status" value="1"/>
</dbReference>
<dbReference type="NCBIfam" id="TIGR00888">
    <property type="entry name" value="guaA_Nterm"/>
    <property type="match status" value="1"/>
</dbReference>
<dbReference type="NCBIfam" id="NF000848">
    <property type="entry name" value="PRK00074.1"/>
    <property type="match status" value="1"/>
</dbReference>
<dbReference type="PANTHER" id="PTHR11922:SF2">
    <property type="entry name" value="GMP SYNTHASE [GLUTAMINE-HYDROLYZING]"/>
    <property type="match status" value="1"/>
</dbReference>
<dbReference type="PANTHER" id="PTHR11922">
    <property type="entry name" value="GMP SYNTHASE-RELATED"/>
    <property type="match status" value="1"/>
</dbReference>
<dbReference type="Pfam" id="PF00117">
    <property type="entry name" value="GATase"/>
    <property type="match status" value="1"/>
</dbReference>
<dbReference type="Pfam" id="PF00958">
    <property type="entry name" value="GMP_synt_C"/>
    <property type="match status" value="1"/>
</dbReference>
<dbReference type="Pfam" id="PF02540">
    <property type="entry name" value="NAD_synthase"/>
    <property type="match status" value="1"/>
</dbReference>
<dbReference type="PRINTS" id="PR00099">
    <property type="entry name" value="CPSGATASE"/>
</dbReference>
<dbReference type="PRINTS" id="PR00096">
    <property type="entry name" value="GATASE"/>
</dbReference>
<dbReference type="SUPFAM" id="SSF52402">
    <property type="entry name" value="Adenine nucleotide alpha hydrolases-like"/>
    <property type="match status" value="1"/>
</dbReference>
<dbReference type="SUPFAM" id="SSF52317">
    <property type="entry name" value="Class I glutamine amidotransferase-like"/>
    <property type="match status" value="1"/>
</dbReference>
<dbReference type="SUPFAM" id="SSF54810">
    <property type="entry name" value="GMP synthetase C-terminal dimerisation domain"/>
    <property type="match status" value="1"/>
</dbReference>
<dbReference type="PROSITE" id="PS51273">
    <property type="entry name" value="GATASE_TYPE_1"/>
    <property type="match status" value="1"/>
</dbReference>
<dbReference type="PROSITE" id="PS51553">
    <property type="entry name" value="GMPS_ATP_PPASE"/>
    <property type="match status" value="1"/>
</dbReference>
<organism>
    <name type="scientific">Exiguobacterium sibiricum (strain DSM 17290 / CCUG 55495 / CIP 109462 / JCM 13490 / 255-15)</name>
    <dbReference type="NCBI Taxonomy" id="262543"/>
    <lineage>
        <taxon>Bacteria</taxon>
        <taxon>Bacillati</taxon>
        <taxon>Bacillota</taxon>
        <taxon>Bacilli</taxon>
        <taxon>Bacillales</taxon>
        <taxon>Bacillales Family XII. Incertae Sedis</taxon>
        <taxon>Exiguobacterium</taxon>
    </lineage>
</organism>
<name>GUAA_EXIS2</name>
<gene>
    <name evidence="1" type="primary">guaA</name>
    <name type="ordered locus">Exig_0439</name>
</gene>
<reference key="1">
    <citation type="submission" date="2008-04" db="EMBL/GenBank/DDBJ databases">
        <title>Complete sequence of chromosome of Exiguobacterium sibiricum 255-15.</title>
        <authorList>
            <consortium name="US DOE Joint Genome Institute"/>
            <person name="Copeland A."/>
            <person name="Lucas S."/>
            <person name="Lapidus A."/>
            <person name="Glavina del Rio T."/>
            <person name="Dalin E."/>
            <person name="Tice H."/>
            <person name="Bruce D."/>
            <person name="Goodwin L."/>
            <person name="Pitluck S."/>
            <person name="Kiss H."/>
            <person name="Chertkov O."/>
            <person name="Monk C."/>
            <person name="Brettin T."/>
            <person name="Detter J.C."/>
            <person name="Han C."/>
            <person name="Kuske C.R."/>
            <person name="Schmutz J."/>
            <person name="Larimer F."/>
            <person name="Land M."/>
            <person name="Hauser L."/>
            <person name="Kyrpides N."/>
            <person name="Mikhailova N."/>
            <person name="Vishnivetskaya T."/>
            <person name="Rodrigues D.F."/>
            <person name="Gilichinsky D."/>
            <person name="Tiedje J."/>
            <person name="Richardson P."/>
        </authorList>
    </citation>
    <scope>NUCLEOTIDE SEQUENCE [LARGE SCALE GENOMIC DNA]</scope>
    <source>
        <strain>DSM 17290 / CCUG 55495 / CIP 109462 / JCM 13490 / 255-15</strain>
    </source>
</reference>
<sequence length="514" mass="57763">MEAHLDQEMILVLDFGGQYNQLITRRIRDLGVYSELHSHKITAAEVKDIAPAGIIFSGGPRSVYAEDAYRCDPEIFDLGIPIFGICYGMQLMSQHFGGTVERAGHREYGKATLTLNDPSPMYANLPLEQTVWMSHSDLVTSVPNGFVVDGTNVSCPIASIKNEELKMYGVQYHPEVNHTMFGKELLKNFLFEVCQCTGDWSMENFIEIEIAKIKEEVGDKKVLCALSGGVDSSVVAALIHAAIGDQLTCMFVDHGLLRKGEAESVMKTFADHFHMNVIKIDAQDRFLNKLKGISDPEQKRKIIGNEFVYVFDEEASKLTDMDFLAQGTLYTDIIESGTDTAQTIKSHHNVGGLPEDMQFKLIEPINTLFKDEVRELGKELGLSDEIVWRQPFPGPGLGIRVLGEITDEKLEIVRESDFILRDEIKKAGLEREIWQYFTVLPPLRSVGVMGDERTYDYAVGIRAVTSIDGMTSDWARIPWDVLEKISVRIVNEVQNVNRVLYDVTSKPPSTIEWE</sequence>
<keyword id="KW-0067">ATP-binding</keyword>
<keyword id="KW-0315">Glutamine amidotransferase</keyword>
<keyword id="KW-0332">GMP biosynthesis</keyword>
<keyword id="KW-0436">Ligase</keyword>
<keyword id="KW-0547">Nucleotide-binding</keyword>
<keyword id="KW-0658">Purine biosynthesis</keyword>
<keyword id="KW-1185">Reference proteome</keyword>
<comment type="function">
    <text evidence="1">Catalyzes the synthesis of GMP from XMP.</text>
</comment>
<comment type="catalytic activity">
    <reaction evidence="1">
        <text>XMP + L-glutamine + ATP + H2O = GMP + L-glutamate + AMP + diphosphate + 2 H(+)</text>
        <dbReference type="Rhea" id="RHEA:11680"/>
        <dbReference type="ChEBI" id="CHEBI:15377"/>
        <dbReference type="ChEBI" id="CHEBI:15378"/>
        <dbReference type="ChEBI" id="CHEBI:29985"/>
        <dbReference type="ChEBI" id="CHEBI:30616"/>
        <dbReference type="ChEBI" id="CHEBI:33019"/>
        <dbReference type="ChEBI" id="CHEBI:57464"/>
        <dbReference type="ChEBI" id="CHEBI:58115"/>
        <dbReference type="ChEBI" id="CHEBI:58359"/>
        <dbReference type="ChEBI" id="CHEBI:456215"/>
        <dbReference type="EC" id="6.3.5.2"/>
    </reaction>
</comment>
<comment type="pathway">
    <text evidence="1">Purine metabolism; GMP biosynthesis; GMP from XMP (L-Gln route): step 1/1.</text>
</comment>
<comment type="subunit">
    <text evidence="1">Homodimer.</text>
</comment>
<proteinExistence type="inferred from homology"/>